<name>ENO_CRYPA</name>
<dbReference type="EC" id="4.2.1.11"/>
<dbReference type="EMBL" id="AY499570">
    <property type="protein sequence ID" value="AAR92205.1"/>
    <property type="molecule type" value="Genomic_DNA"/>
</dbReference>
<dbReference type="SMR" id="Q6RG04"/>
<dbReference type="OMA" id="RCMMSHR"/>
<dbReference type="UniPathway" id="UPA00109">
    <property type="reaction ID" value="UER00187"/>
</dbReference>
<dbReference type="GO" id="GO:0000015">
    <property type="term" value="C:phosphopyruvate hydratase complex"/>
    <property type="evidence" value="ECO:0007669"/>
    <property type="project" value="InterPro"/>
</dbReference>
<dbReference type="GO" id="GO:0000287">
    <property type="term" value="F:magnesium ion binding"/>
    <property type="evidence" value="ECO:0007669"/>
    <property type="project" value="InterPro"/>
</dbReference>
<dbReference type="GO" id="GO:0004634">
    <property type="term" value="F:phosphopyruvate hydratase activity"/>
    <property type="evidence" value="ECO:0007669"/>
    <property type="project" value="UniProtKB-EC"/>
</dbReference>
<dbReference type="GO" id="GO:0006096">
    <property type="term" value="P:glycolytic process"/>
    <property type="evidence" value="ECO:0007669"/>
    <property type="project" value="UniProtKB-UniPathway"/>
</dbReference>
<dbReference type="CDD" id="cd03313">
    <property type="entry name" value="enolase"/>
    <property type="match status" value="1"/>
</dbReference>
<dbReference type="FunFam" id="3.30.390.10:FF:000001">
    <property type="entry name" value="Enolase"/>
    <property type="match status" value="1"/>
</dbReference>
<dbReference type="FunFam" id="3.20.20.120:FF:000002">
    <property type="entry name" value="Enolase 1"/>
    <property type="match status" value="1"/>
</dbReference>
<dbReference type="Gene3D" id="3.20.20.120">
    <property type="entry name" value="Enolase-like C-terminal domain"/>
    <property type="match status" value="1"/>
</dbReference>
<dbReference type="Gene3D" id="3.30.390.10">
    <property type="entry name" value="Enolase-like, N-terminal domain"/>
    <property type="match status" value="1"/>
</dbReference>
<dbReference type="HAMAP" id="MF_00318">
    <property type="entry name" value="Enolase"/>
    <property type="match status" value="1"/>
</dbReference>
<dbReference type="InterPro" id="IPR000941">
    <property type="entry name" value="Enolase"/>
</dbReference>
<dbReference type="InterPro" id="IPR036849">
    <property type="entry name" value="Enolase-like_C_sf"/>
</dbReference>
<dbReference type="InterPro" id="IPR029017">
    <property type="entry name" value="Enolase-like_N"/>
</dbReference>
<dbReference type="InterPro" id="IPR020810">
    <property type="entry name" value="Enolase_C"/>
</dbReference>
<dbReference type="InterPro" id="IPR020809">
    <property type="entry name" value="Enolase_CS"/>
</dbReference>
<dbReference type="InterPro" id="IPR020811">
    <property type="entry name" value="Enolase_N"/>
</dbReference>
<dbReference type="NCBIfam" id="TIGR01060">
    <property type="entry name" value="eno"/>
    <property type="match status" value="1"/>
</dbReference>
<dbReference type="PANTHER" id="PTHR11902">
    <property type="entry name" value="ENOLASE"/>
    <property type="match status" value="1"/>
</dbReference>
<dbReference type="PANTHER" id="PTHR11902:SF1">
    <property type="entry name" value="ENOLASE"/>
    <property type="match status" value="1"/>
</dbReference>
<dbReference type="Pfam" id="PF00113">
    <property type="entry name" value="Enolase_C"/>
    <property type="match status" value="1"/>
</dbReference>
<dbReference type="Pfam" id="PF03952">
    <property type="entry name" value="Enolase_N"/>
    <property type="match status" value="1"/>
</dbReference>
<dbReference type="PIRSF" id="PIRSF001400">
    <property type="entry name" value="Enolase"/>
    <property type="match status" value="1"/>
</dbReference>
<dbReference type="PRINTS" id="PR00148">
    <property type="entry name" value="ENOLASE"/>
</dbReference>
<dbReference type="SFLD" id="SFLDS00001">
    <property type="entry name" value="Enolase"/>
    <property type="match status" value="1"/>
</dbReference>
<dbReference type="SFLD" id="SFLDF00002">
    <property type="entry name" value="enolase"/>
    <property type="match status" value="1"/>
</dbReference>
<dbReference type="SMART" id="SM01192">
    <property type="entry name" value="Enolase_C"/>
    <property type="match status" value="1"/>
</dbReference>
<dbReference type="SMART" id="SM01193">
    <property type="entry name" value="Enolase_N"/>
    <property type="match status" value="1"/>
</dbReference>
<dbReference type="SUPFAM" id="SSF51604">
    <property type="entry name" value="Enolase C-terminal domain-like"/>
    <property type="match status" value="1"/>
</dbReference>
<dbReference type="SUPFAM" id="SSF54826">
    <property type="entry name" value="Enolase N-terminal domain-like"/>
    <property type="match status" value="1"/>
</dbReference>
<dbReference type="PROSITE" id="PS00164">
    <property type="entry name" value="ENOLASE"/>
    <property type="match status" value="1"/>
</dbReference>
<reference key="1">
    <citation type="submission" date="2003-12" db="EMBL/GenBank/DDBJ databases">
        <title>Cloning and Characterization of Enolase, ENO1, from Cryphonectria parasitica.</title>
        <authorList>
            <person name="Kim M.-J."/>
            <person name="Chung H.-J."/>
            <person name="Park S.-M."/>
            <person name="Yang M.-S."/>
            <person name="Kim D.-H."/>
        </authorList>
    </citation>
    <scope>NUCLEOTIDE SEQUENCE [GENOMIC DNA]</scope>
</reference>
<proteinExistence type="inferred from homology"/>
<evidence type="ECO:0000250" key="1"/>
<evidence type="ECO:0000305" key="2"/>
<gene>
    <name type="primary">ENO1</name>
</gene>
<accession>Q6RG04</accession>
<feature type="chain" id="PRO_0000134047" description="Enolase">
    <location>
        <begin position="1"/>
        <end position="438"/>
    </location>
</feature>
<feature type="active site" description="Proton donor" evidence="1">
    <location>
        <position position="211"/>
    </location>
</feature>
<feature type="active site" description="Proton acceptor" evidence="1">
    <location>
        <position position="347"/>
    </location>
</feature>
<feature type="binding site" evidence="1">
    <location>
        <position position="159"/>
    </location>
    <ligand>
        <name>substrate</name>
    </ligand>
</feature>
<feature type="binding site" evidence="1">
    <location>
        <position position="168"/>
    </location>
    <ligand>
        <name>substrate</name>
    </ligand>
</feature>
<feature type="binding site" evidence="1">
    <location>
        <position position="246"/>
    </location>
    <ligand>
        <name>Mg(2+)</name>
        <dbReference type="ChEBI" id="CHEBI:18420"/>
    </ligand>
</feature>
<feature type="binding site" evidence="1">
    <location>
        <position position="297"/>
    </location>
    <ligand>
        <name>Mg(2+)</name>
        <dbReference type="ChEBI" id="CHEBI:18420"/>
    </ligand>
</feature>
<feature type="binding site" evidence="1">
    <location>
        <position position="297"/>
    </location>
    <ligand>
        <name>substrate</name>
    </ligand>
</feature>
<feature type="binding site" evidence="1">
    <location>
        <position position="322"/>
    </location>
    <ligand>
        <name>Mg(2+)</name>
        <dbReference type="ChEBI" id="CHEBI:18420"/>
    </ligand>
</feature>
<feature type="binding site" evidence="1">
    <location>
        <position position="322"/>
    </location>
    <ligand>
        <name>substrate</name>
    </ligand>
</feature>
<feature type="binding site" evidence="1">
    <location>
        <begin position="374"/>
        <end position="377"/>
    </location>
    <ligand>
        <name>substrate</name>
    </ligand>
</feature>
<feature type="binding site" evidence="1">
    <location>
        <position position="398"/>
    </location>
    <ligand>
        <name>substrate</name>
    </ligand>
</feature>
<sequence>MPISKIHARYVYDSRGNPTVEVDLVTETGLHRAIVPSGASTGQHEACELRDGDKSKWLGKGVLKAVENVNTVLGPELIKAGLDVKDQTAVDEFLIKLDGTANKTKLGANAILGVSLAVAKAGAAEKGVPLYAHVSDLAGTKKPYVLPVPFQNVLNGGSHAGGRLAFQEFMIVPSAAPSFSEGLRWGAETYHQLKSLAKKKYGQSAGNVGDEGGVAPDIQTAEEALELISEAIEKAGYTGKMKIAMDVASSEFYKEDVKKYDLDFKNPDSDPSNWLTYEQLAALYADLTKKYPIVSIEDPFAEDDWEAWSYFYKTQDIQLVADDLTVTNPIRIKKAIELKAANALLLKVNQIGTLTESIQAAKDSYADGWGVMVSHRSGETEDVTIADIVVGIRAGQIKTGAPARSERLAKLNQILRIEEELGSNAIYAGEDFRKSVTL</sequence>
<organism>
    <name type="scientific">Cryphonectria parasitica</name>
    <name type="common">Chestnut blight fungus</name>
    <name type="synonym">Endothia parasitica</name>
    <dbReference type="NCBI Taxonomy" id="5116"/>
    <lineage>
        <taxon>Eukaryota</taxon>
        <taxon>Fungi</taxon>
        <taxon>Dikarya</taxon>
        <taxon>Ascomycota</taxon>
        <taxon>Pezizomycotina</taxon>
        <taxon>Sordariomycetes</taxon>
        <taxon>Sordariomycetidae</taxon>
        <taxon>Diaporthales</taxon>
        <taxon>Cryphonectriaceae</taxon>
        <taxon>Cryphonectria-Endothia species complex</taxon>
        <taxon>Cryphonectria</taxon>
    </lineage>
</organism>
<protein>
    <recommendedName>
        <fullName>Enolase</fullName>
        <ecNumber>4.2.1.11</ecNumber>
    </recommendedName>
    <alternativeName>
        <fullName>2-phospho-D-glycerate hydro-lyase</fullName>
    </alternativeName>
    <alternativeName>
        <fullName>2-phosphoglycerate dehydratase</fullName>
    </alternativeName>
</protein>
<keyword id="KW-0963">Cytoplasm</keyword>
<keyword id="KW-0324">Glycolysis</keyword>
<keyword id="KW-0456">Lyase</keyword>
<keyword id="KW-0460">Magnesium</keyword>
<keyword id="KW-0479">Metal-binding</keyword>
<comment type="catalytic activity">
    <reaction>
        <text>(2R)-2-phosphoglycerate = phosphoenolpyruvate + H2O</text>
        <dbReference type="Rhea" id="RHEA:10164"/>
        <dbReference type="ChEBI" id="CHEBI:15377"/>
        <dbReference type="ChEBI" id="CHEBI:58289"/>
        <dbReference type="ChEBI" id="CHEBI:58702"/>
        <dbReference type="EC" id="4.2.1.11"/>
    </reaction>
</comment>
<comment type="cofactor">
    <cofactor evidence="1">
        <name>Mg(2+)</name>
        <dbReference type="ChEBI" id="CHEBI:18420"/>
    </cofactor>
    <text evidence="1">Mg(2+) is required for catalysis and for stabilizing the dimer.</text>
</comment>
<comment type="pathway">
    <text>Carbohydrate degradation; glycolysis; pyruvate from D-glyceraldehyde 3-phosphate: step 4/5.</text>
</comment>
<comment type="subunit">
    <text evidence="1">Homodimer.</text>
</comment>
<comment type="subcellular location">
    <subcellularLocation>
        <location evidence="1">Cytoplasm</location>
    </subcellularLocation>
</comment>
<comment type="similarity">
    <text evidence="2">Belongs to the enolase family.</text>
</comment>